<protein>
    <recommendedName>
        <fullName evidence="1">Histidinol-phosphate aminotransferase</fullName>
        <ecNumber evidence="1">2.6.1.9</ecNumber>
    </recommendedName>
    <alternativeName>
        <fullName evidence="1">Imidazole acetol-phosphate transaminase</fullName>
    </alternativeName>
</protein>
<comment type="catalytic activity">
    <reaction evidence="1">
        <text>L-histidinol phosphate + 2-oxoglutarate = 3-(imidazol-4-yl)-2-oxopropyl phosphate + L-glutamate</text>
        <dbReference type="Rhea" id="RHEA:23744"/>
        <dbReference type="ChEBI" id="CHEBI:16810"/>
        <dbReference type="ChEBI" id="CHEBI:29985"/>
        <dbReference type="ChEBI" id="CHEBI:57766"/>
        <dbReference type="ChEBI" id="CHEBI:57980"/>
        <dbReference type="EC" id="2.6.1.9"/>
    </reaction>
</comment>
<comment type="cofactor">
    <cofactor evidence="1">
        <name>pyridoxal 5'-phosphate</name>
        <dbReference type="ChEBI" id="CHEBI:597326"/>
    </cofactor>
</comment>
<comment type="pathway">
    <text evidence="1">Amino-acid biosynthesis; L-histidine biosynthesis; L-histidine from 5-phospho-alpha-D-ribose 1-diphosphate: step 7/9.</text>
</comment>
<comment type="subunit">
    <text evidence="1">Homodimer.</text>
</comment>
<comment type="similarity">
    <text evidence="1">Belongs to the class-II pyridoxal-phosphate-dependent aminotransferase family. Histidinol-phosphate aminotransferase subfamily.</text>
</comment>
<sequence length="361" mass="41437">MNAKGESMLSRRLEALTPYVPGEQPRDRKYLKLNTNENPWPPSPRIEALLREYDPDQLRLYPDPWSLSLRQKIARKYSVDVDNIFVGNGSDEILSFVWYAFFDGLYGKLVFPQFTYSFYPVYCDFYEIPYRRIPLRPDFTLDLEAMIENGGEPSCGMAFPNPNAPTGIALTLKQIEDLLNRYPTDRVVVIDEAYIDFGGESAVGLIDRYANLLVARTFSKSFSLAGLRLGYALGSPELIRALFVTKDSFNSYTVGRLTQTIGEIAIEDEAWFAEKIARIIEARDFFSEELKGQGWQVLPSKANFVFVRKPGLTGQTIYETLKERGILVRYFNVEGIRDFVRVTIGKREDMARLLEELKRLF</sequence>
<accession>Q2LST8</accession>
<name>HIS8_SYNAS</name>
<evidence type="ECO:0000255" key="1">
    <source>
        <dbReference type="HAMAP-Rule" id="MF_01023"/>
    </source>
</evidence>
<organism>
    <name type="scientific">Syntrophus aciditrophicus (strain SB)</name>
    <dbReference type="NCBI Taxonomy" id="56780"/>
    <lineage>
        <taxon>Bacteria</taxon>
        <taxon>Pseudomonadati</taxon>
        <taxon>Thermodesulfobacteriota</taxon>
        <taxon>Syntrophia</taxon>
        <taxon>Syntrophales</taxon>
        <taxon>Syntrophaceae</taxon>
        <taxon>Syntrophus</taxon>
    </lineage>
</organism>
<dbReference type="EC" id="2.6.1.9" evidence="1"/>
<dbReference type="EMBL" id="CP000252">
    <property type="protein sequence ID" value="ABC77148.1"/>
    <property type="molecule type" value="Genomic_DNA"/>
</dbReference>
<dbReference type="SMR" id="Q2LST8"/>
<dbReference type="FunCoup" id="Q2LST8">
    <property type="interactions" value="417"/>
</dbReference>
<dbReference type="STRING" id="56780.SYN_01517"/>
<dbReference type="KEGG" id="sat:SYN_01517"/>
<dbReference type="eggNOG" id="COG0079">
    <property type="taxonomic scope" value="Bacteria"/>
</dbReference>
<dbReference type="HOGENOM" id="CLU_017584_3_0_7"/>
<dbReference type="InParanoid" id="Q2LST8"/>
<dbReference type="OrthoDB" id="9813612at2"/>
<dbReference type="UniPathway" id="UPA00031">
    <property type="reaction ID" value="UER00012"/>
</dbReference>
<dbReference type="Proteomes" id="UP000001933">
    <property type="component" value="Chromosome"/>
</dbReference>
<dbReference type="GO" id="GO:0004400">
    <property type="term" value="F:histidinol-phosphate transaminase activity"/>
    <property type="evidence" value="ECO:0007669"/>
    <property type="project" value="UniProtKB-UniRule"/>
</dbReference>
<dbReference type="GO" id="GO:0030170">
    <property type="term" value="F:pyridoxal phosphate binding"/>
    <property type="evidence" value="ECO:0007669"/>
    <property type="project" value="InterPro"/>
</dbReference>
<dbReference type="GO" id="GO:0000105">
    <property type="term" value="P:L-histidine biosynthetic process"/>
    <property type="evidence" value="ECO:0007669"/>
    <property type="project" value="UniProtKB-UniRule"/>
</dbReference>
<dbReference type="CDD" id="cd00609">
    <property type="entry name" value="AAT_like"/>
    <property type="match status" value="1"/>
</dbReference>
<dbReference type="Gene3D" id="3.90.1150.10">
    <property type="entry name" value="Aspartate Aminotransferase, domain 1"/>
    <property type="match status" value="1"/>
</dbReference>
<dbReference type="Gene3D" id="3.40.640.10">
    <property type="entry name" value="Type I PLP-dependent aspartate aminotransferase-like (Major domain)"/>
    <property type="match status" value="1"/>
</dbReference>
<dbReference type="HAMAP" id="MF_01023">
    <property type="entry name" value="HisC_aminotrans_2"/>
    <property type="match status" value="1"/>
</dbReference>
<dbReference type="InterPro" id="IPR001917">
    <property type="entry name" value="Aminotrans_II_pyridoxalP_BS"/>
</dbReference>
<dbReference type="InterPro" id="IPR004839">
    <property type="entry name" value="Aminotransferase_I/II_large"/>
</dbReference>
<dbReference type="InterPro" id="IPR005861">
    <property type="entry name" value="HisP_aminotrans"/>
</dbReference>
<dbReference type="InterPro" id="IPR050106">
    <property type="entry name" value="HistidinolP_aminotransfase"/>
</dbReference>
<dbReference type="InterPro" id="IPR015424">
    <property type="entry name" value="PyrdxlP-dep_Trfase"/>
</dbReference>
<dbReference type="InterPro" id="IPR015421">
    <property type="entry name" value="PyrdxlP-dep_Trfase_major"/>
</dbReference>
<dbReference type="InterPro" id="IPR015422">
    <property type="entry name" value="PyrdxlP-dep_Trfase_small"/>
</dbReference>
<dbReference type="NCBIfam" id="TIGR01141">
    <property type="entry name" value="hisC"/>
    <property type="match status" value="1"/>
</dbReference>
<dbReference type="PANTHER" id="PTHR43643:SF3">
    <property type="entry name" value="HISTIDINOL-PHOSPHATE AMINOTRANSFERASE"/>
    <property type="match status" value="1"/>
</dbReference>
<dbReference type="PANTHER" id="PTHR43643">
    <property type="entry name" value="HISTIDINOL-PHOSPHATE AMINOTRANSFERASE 2"/>
    <property type="match status" value="1"/>
</dbReference>
<dbReference type="Pfam" id="PF00155">
    <property type="entry name" value="Aminotran_1_2"/>
    <property type="match status" value="1"/>
</dbReference>
<dbReference type="SUPFAM" id="SSF53383">
    <property type="entry name" value="PLP-dependent transferases"/>
    <property type="match status" value="1"/>
</dbReference>
<dbReference type="PROSITE" id="PS00599">
    <property type="entry name" value="AA_TRANSFER_CLASS_2"/>
    <property type="match status" value="1"/>
</dbReference>
<keyword id="KW-0028">Amino-acid biosynthesis</keyword>
<keyword id="KW-0032">Aminotransferase</keyword>
<keyword id="KW-0368">Histidine biosynthesis</keyword>
<keyword id="KW-0663">Pyridoxal phosphate</keyword>
<keyword id="KW-1185">Reference proteome</keyword>
<keyword id="KW-0808">Transferase</keyword>
<proteinExistence type="inferred from homology"/>
<gene>
    <name evidence="1" type="primary">hisC</name>
    <name type="ordered locus">SYNAS_12690</name>
    <name type="ORF">SYN_01517</name>
</gene>
<feature type="chain" id="PRO_0000319793" description="Histidinol-phosphate aminotransferase">
    <location>
        <begin position="1"/>
        <end position="361"/>
    </location>
</feature>
<feature type="modified residue" description="N6-(pyridoxal phosphate)lysine" evidence="1">
    <location>
        <position position="220"/>
    </location>
</feature>
<reference key="1">
    <citation type="journal article" date="2007" name="Proc. Natl. Acad. Sci. U.S.A.">
        <title>The genome of Syntrophus aciditrophicus: life at the thermodynamic limit of microbial growth.</title>
        <authorList>
            <person name="McInerney M.J."/>
            <person name="Rohlin L."/>
            <person name="Mouttaki H."/>
            <person name="Kim U."/>
            <person name="Krupp R.S."/>
            <person name="Rios-Hernandez L."/>
            <person name="Sieber J."/>
            <person name="Struchtemeyer C.G."/>
            <person name="Bhattacharyya A."/>
            <person name="Campbell J.W."/>
            <person name="Gunsalus R.P."/>
        </authorList>
    </citation>
    <scope>NUCLEOTIDE SEQUENCE [LARGE SCALE GENOMIC DNA]</scope>
    <source>
        <strain>SB</strain>
    </source>
</reference>